<protein>
    <recommendedName>
        <fullName evidence="1">Adenylosuccinate synthetase</fullName>
        <shortName evidence="1">AMPSase</shortName>
        <shortName evidence="1">AdSS</shortName>
        <ecNumber evidence="1">6.3.4.4</ecNumber>
    </recommendedName>
    <alternativeName>
        <fullName evidence="1">IMP--aspartate ligase</fullName>
    </alternativeName>
</protein>
<dbReference type="EC" id="6.3.4.4" evidence="1"/>
<dbReference type="EMBL" id="BA000011">
    <property type="protein sequence ID" value="BAB59432.1"/>
    <property type="molecule type" value="Genomic_DNA"/>
</dbReference>
<dbReference type="RefSeq" id="WP_010916545.1">
    <property type="nucleotide sequence ID" value="NC_002689.2"/>
</dbReference>
<dbReference type="SMR" id="Q97C15"/>
<dbReference type="STRING" id="273116.gene:9381064"/>
<dbReference type="PaxDb" id="273116-14324504"/>
<dbReference type="GeneID" id="1440803"/>
<dbReference type="KEGG" id="tvo:TVG0301512"/>
<dbReference type="eggNOG" id="arCOG04387">
    <property type="taxonomic scope" value="Archaea"/>
</dbReference>
<dbReference type="HOGENOM" id="CLU_029848_0_0_2"/>
<dbReference type="OrthoDB" id="372247at2157"/>
<dbReference type="PhylomeDB" id="Q97C15"/>
<dbReference type="UniPathway" id="UPA00075">
    <property type="reaction ID" value="UER00335"/>
</dbReference>
<dbReference type="Proteomes" id="UP000001017">
    <property type="component" value="Chromosome"/>
</dbReference>
<dbReference type="GO" id="GO:0005737">
    <property type="term" value="C:cytoplasm"/>
    <property type="evidence" value="ECO:0007669"/>
    <property type="project" value="UniProtKB-SubCell"/>
</dbReference>
<dbReference type="GO" id="GO:0004019">
    <property type="term" value="F:adenylosuccinate synthase activity"/>
    <property type="evidence" value="ECO:0007669"/>
    <property type="project" value="UniProtKB-UniRule"/>
</dbReference>
<dbReference type="GO" id="GO:0005525">
    <property type="term" value="F:GTP binding"/>
    <property type="evidence" value="ECO:0007669"/>
    <property type="project" value="UniProtKB-UniRule"/>
</dbReference>
<dbReference type="GO" id="GO:0000287">
    <property type="term" value="F:magnesium ion binding"/>
    <property type="evidence" value="ECO:0007669"/>
    <property type="project" value="UniProtKB-UniRule"/>
</dbReference>
<dbReference type="GO" id="GO:0044208">
    <property type="term" value="P:'de novo' AMP biosynthetic process"/>
    <property type="evidence" value="ECO:0007669"/>
    <property type="project" value="UniProtKB-UniRule"/>
</dbReference>
<dbReference type="GO" id="GO:0046040">
    <property type="term" value="P:IMP metabolic process"/>
    <property type="evidence" value="ECO:0007669"/>
    <property type="project" value="TreeGrafter"/>
</dbReference>
<dbReference type="CDD" id="cd03108">
    <property type="entry name" value="AdSS"/>
    <property type="match status" value="1"/>
</dbReference>
<dbReference type="FunFam" id="1.10.300.10:FF:000001">
    <property type="entry name" value="Adenylosuccinate synthetase"/>
    <property type="match status" value="1"/>
</dbReference>
<dbReference type="FunFam" id="3.90.170.10:FF:000001">
    <property type="entry name" value="Adenylosuccinate synthetase"/>
    <property type="match status" value="1"/>
</dbReference>
<dbReference type="Gene3D" id="3.40.440.10">
    <property type="entry name" value="Adenylosuccinate Synthetase, subunit A, domain 1"/>
    <property type="match status" value="1"/>
</dbReference>
<dbReference type="Gene3D" id="1.10.300.10">
    <property type="entry name" value="Adenylosuccinate Synthetase, subunit A, domain 2"/>
    <property type="match status" value="1"/>
</dbReference>
<dbReference type="Gene3D" id="3.90.170.10">
    <property type="entry name" value="Adenylosuccinate Synthetase, subunit A, domain 3"/>
    <property type="match status" value="1"/>
</dbReference>
<dbReference type="HAMAP" id="MF_00011">
    <property type="entry name" value="Adenylosucc_synth"/>
    <property type="match status" value="1"/>
</dbReference>
<dbReference type="InterPro" id="IPR018220">
    <property type="entry name" value="Adenylosuccin_syn_GTP-bd"/>
</dbReference>
<dbReference type="InterPro" id="IPR033128">
    <property type="entry name" value="Adenylosuccin_syn_Lys_AS"/>
</dbReference>
<dbReference type="InterPro" id="IPR042109">
    <property type="entry name" value="Adenylosuccinate_synth_dom1"/>
</dbReference>
<dbReference type="InterPro" id="IPR042110">
    <property type="entry name" value="Adenylosuccinate_synth_dom2"/>
</dbReference>
<dbReference type="InterPro" id="IPR042111">
    <property type="entry name" value="Adenylosuccinate_synth_dom3"/>
</dbReference>
<dbReference type="InterPro" id="IPR001114">
    <property type="entry name" value="Adenylosuccinate_synthetase"/>
</dbReference>
<dbReference type="InterPro" id="IPR027417">
    <property type="entry name" value="P-loop_NTPase"/>
</dbReference>
<dbReference type="NCBIfam" id="NF002223">
    <property type="entry name" value="PRK01117.1"/>
    <property type="match status" value="1"/>
</dbReference>
<dbReference type="NCBIfam" id="TIGR00184">
    <property type="entry name" value="purA"/>
    <property type="match status" value="1"/>
</dbReference>
<dbReference type="PANTHER" id="PTHR11846">
    <property type="entry name" value="ADENYLOSUCCINATE SYNTHETASE"/>
    <property type="match status" value="1"/>
</dbReference>
<dbReference type="PANTHER" id="PTHR11846:SF0">
    <property type="entry name" value="ADENYLOSUCCINATE SYNTHETASE"/>
    <property type="match status" value="1"/>
</dbReference>
<dbReference type="Pfam" id="PF00709">
    <property type="entry name" value="Adenylsucc_synt"/>
    <property type="match status" value="1"/>
</dbReference>
<dbReference type="SMART" id="SM00788">
    <property type="entry name" value="Adenylsucc_synt"/>
    <property type="match status" value="1"/>
</dbReference>
<dbReference type="SUPFAM" id="SSF52540">
    <property type="entry name" value="P-loop containing nucleoside triphosphate hydrolases"/>
    <property type="match status" value="1"/>
</dbReference>
<dbReference type="PROSITE" id="PS01266">
    <property type="entry name" value="ADENYLOSUCCIN_SYN_1"/>
    <property type="match status" value="1"/>
</dbReference>
<dbReference type="PROSITE" id="PS00513">
    <property type="entry name" value="ADENYLOSUCCIN_SYN_2"/>
    <property type="match status" value="1"/>
</dbReference>
<comment type="function">
    <text evidence="1">Plays an important role in the de novo pathway of purine nucleotide biosynthesis. Catalyzes the first committed step in the biosynthesis of AMP from IMP.</text>
</comment>
<comment type="catalytic activity">
    <reaction evidence="1">
        <text>IMP + L-aspartate + GTP = N(6)-(1,2-dicarboxyethyl)-AMP + GDP + phosphate + 2 H(+)</text>
        <dbReference type="Rhea" id="RHEA:15753"/>
        <dbReference type="ChEBI" id="CHEBI:15378"/>
        <dbReference type="ChEBI" id="CHEBI:29991"/>
        <dbReference type="ChEBI" id="CHEBI:37565"/>
        <dbReference type="ChEBI" id="CHEBI:43474"/>
        <dbReference type="ChEBI" id="CHEBI:57567"/>
        <dbReference type="ChEBI" id="CHEBI:58053"/>
        <dbReference type="ChEBI" id="CHEBI:58189"/>
        <dbReference type="EC" id="6.3.4.4"/>
    </reaction>
</comment>
<comment type="cofactor">
    <cofactor evidence="1">
        <name>Mg(2+)</name>
        <dbReference type="ChEBI" id="CHEBI:18420"/>
    </cofactor>
    <text evidence="1">Binds 1 Mg(2+) ion per subunit.</text>
</comment>
<comment type="pathway">
    <text evidence="1">Purine metabolism; AMP biosynthesis via de novo pathway; AMP from IMP: step 1/2.</text>
</comment>
<comment type="subunit">
    <text evidence="1">Homodimer.</text>
</comment>
<comment type="subcellular location">
    <subcellularLocation>
        <location evidence="1">Cytoplasm</location>
    </subcellularLocation>
</comment>
<comment type="similarity">
    <text evidence="1">Belongs to the adenylosuccinate synthetase family.</text>
</comment>
<sequence>MSVNYSEDNNRTAVVVGLQFGDEGKGKITDFLSESYDVVVRFNGGTNAGHTVVVGNETYKFHLLPSGSLRTKVVVLGSGMVIDPQSLISEIEIVKKNNSNLAVVVSSNAHVVTKIHKYLDVEEEKIRSSMVIGTTAQGIGPTYEDKYARSGLRMIDLLDYKTIIEKLDIIYRMHENLLSRSEFSDPSVRENLAKELYSYGQELKKYMYYTDILINKLYNEGRTILFEGAQGVLLDPDFGFYPYVTSSNTISASSYTGTGFSMRKIKKVIGVAKAYVSKVGAGPFPTELNDDLAKKIRDAGGEYGTTTGRPRRVGWLDVPLLKYAVQIDDVDEIALTKVDTLGILHTIKVCYSYELDGKQIDYIPKHISEVSRVKPLYEEFEGWGDLSSSLLHPKMRKWEIPQQLRRYIDFIEEQIGRPVTIISSGKDRSKTVRIER</sequence>
<reference key="1">
    <citation type="journal article" date="2000" name="Proc. Natl. Acad. Sci. U.S.A.">
        <title>Archaeal adaptation to higher temperatures revealed by genomic sequence of Thermoplasma volcanium.</title>
        <authorList>
            <person name="Kawashima T."/>
            <person name="Amano N."/>
            <person name="Koike H."/>
            <person name="Makino S."/>
            <person name="Higuchi S."/>
            <person name="Kawashima-Ohya Y."/>
            <person name="Watanabe K."/>
            <person name="Yamazaki M."/>
            <person name="Kanehori K."/>
            <person name="Kawamoto T."/>
            <person name="Nunoshiba T."/>
            <person name="Yamamoto Y."/>
            <person name="Aramaki H."/>
            <person name="Makino K."/>
            <person name="Suzuki M."/>
        </authorList>
    </citation>
    <scope>NUCLEOTIDE SEQUENCE [LARGE SCALE GENOMIC DNA]</scope>
    <source>
        <strain>ATCC 51530 / DSM 4299 / JCM 9571 / NBRC 15438 / GSS1</strain>
    </source>
</reference>
<name>PURA_THEVO</name>
<proteinExistence type="inferred from homology"/>
<accession>Q97C15</accession>
<evidence type="ECO:0000255" key="1">
    <source>
        <dbReference type="HAMAP-Rule" id="MF_00011"/>
    </source>
</evidence>
<organism>
    <name type="scientific">Thermoplasma volcanium (strain ATCC 51530 / DSM 4299 / JCM 9571 / NBRC 15438 / GSS1)</name>
    <dbReference type="NCBI Taxonomy" id="273116"/>
    <lineage>
        <taxon>Archaea</taxon>
        <taxon>Methanobacteriati</taxon>
        <taxon>Thermoplasmatota</taxon>
        <taxon>Thermoplasmata</taxon>
        <taxon>Thermoplasmatales</taxon>
        <taxon>Thermoplasmataceae</taxon>
        <taxon>Thermoplasma</taxon>
    </lineage>
</organism>
<feature type="chain" id="PRO_0000095281" description="Adenylosuccinate synthetase">
    <location>
        <begin position="1"/>
        <end position="436"/>
    </location>
</feature>
<feature type="active site" description="Proton acceptor" evidence="1">
    <location>
        <position position="22"/>
    </location>
</feature>
<feature type="active site" description="Proton donor" evidence="1">
    <location>
        <position position="50"/>
    </location>
</feature>
<feature type="binding site" evidence="1">
    <location>
        <begin position="21"/>
        <end position="27"/>
    </location>
    <ligand>
        <name>GTP</name>
        <dbReference type="ChEBI" id="CHEBI:37565"/>
    </ligand>
</feature>
<feature type="binding site" description="in other chain" evidence="1">
    <location>
        <begin position="22"/>
        <end position="25"/>
    </location>
    <ligand>
        <name>IMP</name>
        <dbReference type="ChEBI" id="CHEBI:58053"/>
        <note>ligand shared between dimeric partners</note>
    </ligand>
</feature>
<feature type="binding site" evidence="1">
    <location>
        <position position="22"/>
    </location>
    <ligand>
        <name>Mg(2+)</name>
        <dbReference type="ChEBI" id="CHEBI:18420"/>
    </ligand>
</feature>
<feature type="binding site" description="in other chain" evidence="1">
    <location>
        <begin position="47"/>
        <end position="50"/>
    </location>
    <ligand>
        <name>IMP</name>
        <dbReference type="ChEBI" id="CHEBI:58053"/>
        <note>ligand shared between dimeric partners</note>
    </ligand>
</feature>
<feature type="binding site" evidence="1">
    <location>
        <begin position="49"/>
        <end position="51"/>
    </location>
    <ligand>
        <name>GTP</name>
        <dbReference type="ChEBI" id="CHEBI:37565"/>
    </ligand>
</feature>
<feature type="binding site" evidence="1">
    <location>
        <position position="49"/>
    </location>
    <ligand>
        <name>Mg(2+)</name>
        <dbReference type="ChEBI" id="CHEBI:18420"/>
    </ligand>
</feature>
<feature type="binding site" description="in other chain" evidence="1">
    <location>
        <position position="135"/>
    </location>
    <ligand>
        <name>IMP</name>
        <dbReference type="ChEBI" id="CHEBI:58053"/>
        <note>ligand shared between dimeric partners</note>
    </ligand>
</feature>
<feature type="binding site" evidence="1">
    <location>
        <position position="149"/>
    </location>
    <ligand>
        <name>IMP</name>
        <dbReference type="ChEBI" id="CHEBI:58053"/>
        <note>ligand shared between dimeric partners</note>
    </ligand>
</feature>
<feature type="binding site" description="in other chain" evidence="1">
    <location>
        <position position="230"/>
    </location>
    <ligand>
        <name>IMP</name>
        <dbReference type="ChEBI" id="CHEBI:58053"/>
        <note>ligand shared between dimeric partners</note>
    </ligand>
</feature>
<feature type="binding site" description="in other chain" evidence="1">
    <location>
        <position position="245"/>
    </location>
    <ligand>
        <name>IMP</name>
        <dbReference type="ChEBI" id="CHEBI:58053"/>
        <note>ligand shared between dimeric partners</note>
    </ligand>
</feature>
<feature type="binding site" evidence="1">
    <location>
        <begin position="305"/>
        <end position="311"/>
    </location>
    <ligand>
        <name>substrate</name>
    </ligand>
</feature>
<feature type="binding site" description="in other chain" evidence="1">
    <location>
        <position position="309"/>
    </location>
    <ligand>
        <name>IMP</name>
        <dbReference type="ChEBI" id="CHEBI:58053"/>
        <note>ligand shared between dimeric partners</note>
    </ligand>
</feature>
<feature type="binding site" evidence="1">
    <location>
        <position position="311"/>
    </location>
    <ligand>
        <name>GTP</name>
        <dbReference type="ChEBI" id="CHEBI:37565"/>
    </ligand>
</feature>
<feature type="binding site" evidence="1">
    <location>
        <begin position="337"/>
        <end position="339"/>
    </location>
    <ligand>
        <name>GTP</name>
        <dbReference type="ChEBI" id="CHEBI:37565"/>
    </ligand>
</feature>
<feature type="binding site" evidence="1">
    <location>
        <begin position="423"/>
        <end position="425"/>
    </location>
    <ligand>
        <name>GTP</name>
        <dbReference type="ChEBI" id="CHEBI:37565"/>
    </ligand>
</feature>
<keyword id="KW-0963">Cytoplasm</keyword>
<keyword id="KW-0342">GTP-binding</keyword>
<keyword id="KW-0436">Ligase</keyword>
<keyword id="KW-0460">Magnesium</keyword>
<keyword id="KW-0479">Metal-binding</keyword>
<keyword id="KW-0547">Nucleotide-binding</keyword>
<keyword id="KW-0658">Purine biosynthesis</keyword>
<gene>
    <name evidence="1" type="primary">purA</name>
    <name type="ordered locus">TV0290</name>
    <name type="ORF">TVG0301512</name>
</gene>